<protein>
    <recommendedName>
        <fullName evidence="1">Dihydroxy-acid dehydratase</fullName>
        <shortName evidence="1">DAD</shortName>
        <ecNumber evidence="1">4.2.1.9</ecNumber>
    </recommendedName>
</protein>
<proteinExistence type="inferred from homology"/>
<name>ILVD_MYCSJ</name>
<gene>
    <name evidence="1" type="primary">ilvD</name>
    <name type="ordered locus">Mjls_0136</name>
</gene>
<sequence length="580" mass="60626">MPSGSSESPADALRASDSTPDIKPRSRDVTDGLEKTAARGMLRAVGMGDDDWVKPQIGVGSSWNEITPCNMSLQRLAQSVKGGVHSAGGFPLEFGTISVSDGISMGHEGMHFSLVSREVIADSVETVVQAERLDGTVLLAGCDKSIPGMLMAAARLDLASVFLYNGSIMPGVAKLTDGSEREVTIIDAFEAVGACARGLMSREDVDIIERAICPGEGACGGMYTANTMASAAEALGMSLPGSASPVAIDKRRDEYARRSGEAVVEMLRRGITARDILTKEAFENAIAVVMAFGGSTNAVLHLLAIAWEANVKLTLEDFTRVGQKVPHLADVKPFGRHVMKHVDEIGGVPVVMKALLDAGLMHGDCLTVTGETMAENLAHIEPPDPDGKVLRAMNNPIHPTGGITILHGSLAPEGAVVKSAGFDSDVFEGTARVFERERAALDALEDGTITHGDVVVIRYEGPKGGPGMREMLAITGAIKGAGLGKDVLLMTDGRFSGGTTGLCVGHIAPEAVDGGPIAFVRDGDRIRLDVAKGTLDLLVDEAEFESRKAGFEPLPPVYTTGVLAKYTKLVGSAAVGAVCG</sequence>
<organism>
    <name type="scientific">Mycobacterium sp. (strain JLS)</name>
    <dbReference type="NCBI Taxonomy" id="164757"/>
    <lineage>
        <taxon>Bacteria</taxon>
        <taxon>Bacillati</taxon>
        <taxon>Actinomycetota</taxon>
        <taxon>Actinomycetes</taxon>
        <taxon>Mycobacteriales</taxon>
        <taxon>Mycobacteriaceae</taxon>
        <taxon>Mycobacterium</taxon>
    </lineage>
</organism>
<accession>A3PSS2</accession>
<feature type="chain" id="PRO_0000321598" description="Dihydroxy-acid dehydratase">
    <location>
        <begin position="1"/>
        <end position="580"/>
    </location>
</feature>
<feature type="region of interest" description="Disordered" evidence="2">
    <location>
        <begin position="1"/>
        <end position="31"/>
    </location>
</feature>
<feature type="compositionally biased region" description="Basic and acidic residues" evidence="2">
    <location>
        <begin position="20"/>
        <end position="31"/>
    </location>
</feature>
<feature type="active site" description="Proton acceptor" evidence="1">
    <location>
        <position position="496"/>
    </location>
</feature>
<feature type="binding site" evidence="1">
    <location>
        <position position="69"/>
    </location>
    <ligand>
        <name>[2Fe-2S] cluster</name>
        <dbReference type="ChEBI" id="CHEBI:190135"/>
    </ligand>
</feature>
<feature type="binding site" evidence="1">
    <location>
        <position position="101"/>
    </location>
    <ligand>
        <name>Mg(2+)</name>
        <dbReference type="ChEBI" id="CHEBI:18420"/>
    </ligand>
</feature>
<feature type="binding site" evidence="1">
    <location>
        <position position="142"/>
    </location>
    <ligand>
        <name>[2Fe-2S] cluster</name>
        <dbReference type="ChEBI" id="CHEBI:190135"/>
    </ligand>
</feature>
<feature type="binding site" evidence="1">
    <location>
        <position position="143"/>
    </location>
    <ligand>
        <name>Mg(2+)</name>
        <dbReference type="ChEBI" id="CHEBI:18420"/>
    </ligand>
</feature>
<feature type="binding site" description="via carbamate group" evidence="1">
    <location>
        <position position="144"/>
    </location>
    <ligand>
        <name>Mg(2+)</name>
        <dbReference type="ChEBI" id="CHEBI:18420"/>
    </ligand>
</feature>
<feature type="binding site" evidence="1">
    <location>
        <position position="219"/>
    </location>
    <ligand>
        <name>[2Fe-2S] cluster</name>
        <dbReference type="ChEBI" id="CHEBI:190135"/>
    </ligand>
</feature>
<feature type="binding site" evidence="1">
    <location>
        <position position="470"/>
    </location>
    <ligand>
        <name>Mg(2+)</name>
        <dbReference type="ChEBI" id="CHEBI:18420"/>
    </ligand>
</feature>
<feature type="modified residue" description="N6-carboxylysine" evidence="1">
    <location>
        <position position="144"/>
    </location>
</feature>
<dbReference type="EC" id="4.2.1.9" evidence="1"/>
<dbReference type="EMBL" id="CP000580">
    <property type="protein sequence ID" value="ABN95949.1"/>
    <property type="molecule type" value="Genomic_DNA"/>
</dbReference>
<dbReference type="SMR" id="A3PSS2"/>
<dbReference type="KEGG" id="mjl:Mjls_0136"/>
<dbReference type="HOGENOM" id="CLU_014271_4_2_11"/>
<dbReference type="BioCyc" id="MSP164757:G1G8C-141-MONOMER"/>
<dbReference type="UniPathway" id="UPA00047">
    <property type="reaction ID" value="UER00057"/>
</dbReference>
<dbReference type="UniPathway" id="UPA00049">
    <property type="reaction ID" value="UER00061"/>
</dbReference>
<dbReference type="GO" id="GO:0051537">
    <property type="term" value="F:2 iron, 2 sulfur cluster binding"/>
    <property type="evidence" value="ECO:0007669"/>
    <property type="project" value="UniProtKB-UniRule"/>
</dbReference>
<dbReference type="GO" id="GO:0004160">
    <property type="term" value="F:dihydroxy-acid dehydratase activity"/>
    <property type="evidence" value="ECO:0007669"/>
    <property type="project" value="UniProtKB-UniRule"/>
</dbReference>
<dbReference type="GO" id="GO:0000287">
    <property type="term" value="F:magnesium ion binding"/>
    <property type="evidence" value="ECO:0007669"/>
    <property type="project" value="UniProtKB-UniRule"/>
</dbReference>
<dbReference type="GO" id="GO:0009097">
    <property type="term" value="P:isoleucine biosynthetic process"/>
    <property type="evidence" value="ECO:0007669"/>
    <property type="project" value="UniProtKB-UniRule"/>
</dbReference>
<dbReference type="GO" id="GO:0009099">
    <property type="term" value="P:L-valine biosynthetic process"/>
    <property type="evidence" value="ECO:0007669"/>
    <property type="project" value="UniProtKB-UniRule"/>
</dbReference>
<dbReference type="FunFam" id="3.50.30.80:FF:000001">
    <property type="entry name" value="Dihydroxy-acid dehydratase"/>
    <property type="match status" value="1"/>
</dbReference>
<dbReference type="Gene3D" id="3.50.30.80">
    <property type="entry name" value="IlvD/EDD C-terminal domain-like"/>
    <property type="match status" value="1"/>
</dbReference>
<dbReference type="HAMAP" id="MF_00012">
    <property type="entry name" value="IlvD"/>
    <property type="match status" value="1"/>
</dbReference>
<dbReference type="InterPro" id="IPR050165">
    <property type="entry name" value="DHAD_IlvD/Edd"/>
</dbReference>
<dbReference type="InterPro" id="IPR042096">
    <property type="entry name" value="Dihydro-acid_dehy_C"/>
</dbReference>
<dbReference type="InterPro" id="IPR004404">
    <property type="entry name" value="DihydroxyA_deHydtase"/>
</dbReference>
<dbReference type="InterPro" id="IPR020558">
    <property type="entry name" value="DiOHA_6PGluconate_deHydtase_CS"/>
</dbReference>
<dbReference type="InterPro" id="IPR056740">
    <property type="entry name" value="ILV_EDD_C"/>
</dbReference>
<dbReference type="InterPro" id="IPR000581">
    <property type="entry name" value="ILV_EDD_N"/>
</dbReference>
<dbReference type="InterPro" id="IPR037237">
    <property type="entry name" value="IlvD/EDD_N"/>
</dbReference>
<dbReference type="NCBIfam" id="TIGR00110">
    <property type="entry name" value="ilvD"/>
    <property type="match status" value="1"/>
</dbReference>
<dbReference type="NCBIfam" id="NF002068">
    <property type="entry name" value="PRK00911.1"/>
    <property type="match status" value="1"/>
</dbReference>
<dbReference type="PANTHER" id="PTHR21000">
    <property type="entry name" value="DIHYDROXY-ACID DEHYDRATASE DAD"/>
    <property type="match status" value="1"/>
</dbReference>
<dbReference type="PANTHER" id="PTHR21000:SF5">
    <property type="entry name" value="DIHYDROXY-ACID DEHYDRATASE, MITOCHONDRIAL"/>
    <property type="match status" value="1"/>
</dbReference>
<dbReference type="Pfam" id="PF24877">
    <property type="entry name" value="ILV_EDD_C"/>
    <property type="match status" value="1"/>
</dbReference>
<dbReference type="Pfam" id="PF00920">
    <property type="entry name" value="ILVD_EDD_N"/>
    <property type="match status" value="1"/>
</dbReference>
<dbReference type="SUPFAM" id="SSF143975">
    <property type="entry name" value="IlvD/EDD N-terminal domain-like"/>
    <property type="match status" value="1"/>
</dbReference>
<dbReference type="SUPFAM" id="SSF52016">
    <property type="entry name" value="LeuD/IlvD-like"/>
    <property type="match status" value="1"/>
</dbReference>
<dbReference type="PROSITE" id="PS00886">
    <property type="entry name" value="ILVD_EDD_1"/>
    <property type="match status" value="1"/>
</dbReference>
<dbReference type="PROSITE" id="PS00887">
    <property type="entry name" value="ILVD_EDD_2"/>
    <property type="match status" value="1"/>
</dbReference>
<reference key="1">
    <citation type="submission" date="2007-02" db="EMBL/GenBank/DDBJ databases">
        <title>Complete sequence of Mycobacterium sp. JLS.</title>
        <authorList>
            <consortium name="US DOE Joint Genome Institute"/>
            <person name="Copeland A."/>
            <person name="Lucas S."/>
            <person name="Lapidus A."/>
            <person name="Barry K."/>
            <person name="Detter J.C."/>
            <person name="Glavina del Rio T."/>
            <person name="Hammon N."/>
            <person name="Israni S."/>
            <person name="Dalin E."/>
            <person name="Tice H."/>
            <person name="Pitluck S."/>
            <person name="Chain P."/>
            <person name="Malfatti S."/>
            <person name="Shin M."/>
            <person name="Vergez L."/>
            <person name="Schmutz J."/>
            <person name="Larimer F."/>
            <person name="Land M."/>
            <person name="Hauser L."/>
            <person name="Kyrpides N."/>
            <person name="Mikhailova N."/>
            <person name="Miller C.D."/>
            <person name="Anderson A.J."/>
            <person name="Sims R.C."/>
            <person name="Richardson P."/>
        </authorList>
    </citation>
    <scope>NUCLEOTIDE SEQUENCE [LARGE SCALE GENOMIC DNA]</scope>
    <source>
        <strain>JLS</strain>
    </source>
</reference>
<keyword id="KW-0001">2Fe-2S</keyword>
<keyword id="KW-0028">Amino-acid biosynthesis</keyword>
<keyword id="KW-0100">Branched-chain amino acid biosynthesis</keyword>
<keyword id="KW-0408">Iron</keyword>
<keyword id="KW-0411">Iron-sulfur</keyword>
<keyword id="KW-0456">Lyase</keyword>
<keyword id="KW-0460">Magnesium</keyword>
<keyword id="KW-0479">Metal-binding</keyword>
<evidence type="ECO:0000255" key="1">
    <source>
        <dbReference type="HAMAP-Rule" id="MF_00012"/>
    </source>
</evidence>
<evidence type="ECO:0000256" key="2">
    <source>
        <dbReference type="SAM" id="MobiDB-lite"/>
    </source>
</evidence>
<comment type="function">
    <text evidence="1">Functions in the biosynthesis of branched-chain amino acids. Catalyzes the dehydration of (2R,3R)-2,3-dihydroxy-3-methylpentanoate (2,3-dihydroxy-3-methylvalerate) into 2-oxo-3-methylpentanoate (2-oxo-3-methylvalerate) and of (2R)-2,3-dihydroxy-3-methylbutanoate (2,3-dihydroxyisovalerate) into 2-oxo-3-methylbutanoate (2-oxoisovalerate), the penultimate precursor to L-isoleucine and L-valine, respectively.</text>
</comment>
<comment type="catalytic activity">
    <reaction evidence="1">
        <text>(2R)-2,3-dihydroxy-3-methylbutanoate = 3-methyl-2-oxobutanoate + H2O</text>
        <dbReference type="Rhea" id="RHEA:24809"/>
        <dbReference type="ChEBI" id="CHEBI:11851"/>
        <dbReference type="ChEBI" id="CHEBI:15377"/>
        <dbReference type="ChEBI" id="CHEBI:49072"/>
        <dbReference type="EC" id="4.2.1.9"/>
    </reaction>
    <physiologicalReaction direction="left-to-right" evidence="1">
        <dbReference type="Rhea" id="RHEA:24810"/>
    </physiologicalReaction>
</comment>
<comment type="catalytic activity">
    <reaction evidence="1">
        <text>(2R,3R)-2,3-dihydroxy-3-methylpentanoate = (S)-3-methyl-2-oxopentanoate + H2O</text>
        <dbReference type="Rhea" id="RHEA:27694"/>
        <dbReference type="ChEBI" id="CHEBI:15377"/>
        <dbReference type="ChEBI" id="CHEBI:35146"/>
        <dbReference type="ChEBI" id="CHEBI:49258"/>
        <dbReference type="EC" id="4.2.1.9"/>
    </reaction>
    <physiologicalReaction direction="left-to-right" evidence="1">
        <dbReference type="Rhea" id="RHEA:27695"/>
    </physiologicalReaction>
</comment>
<comment type="cofactor">
    <cofactor evidence="1">
        <name>[2Fe-2S] cluster</name>
        <dbReference type="ChEBI" id="CHEBI:190135"/>
    </cofactor>
    <text evidence="1">Binds 1 [2Fe-2S] cluster per subunit. This cluster acts as a Lewis acid cofactor.</text>
</comment>
<comment type="cofactor">
    <cofactor evidence="1">
        <name>Mg(2+)</name>
        <dbReference type="ChEBI" id="CHEBI:18420"/>
    </cofactor>
</comment>
<comment type="pathway">
    <text evidence="1">Amino-acid biosynthesis; L-isoleucine biosynthesis; L-isoleucine from 2-oxobutanoate: step 3/4.</text>
</comment>
<comment type="pathway">
    <text evidence="1">Amino-acid biosynthesis; L-valine biosynthesis; L-valine from pyruvate: step 3/4.</text>
</comment>
<comment type="subunit">
    <text evidence="1">Homodimer.</text>
</comment>
<comment type="similarity">
    <text evidence="1">Belongs to the IlvD/Edd family.</text>
</comment>